<proteinExistence type="inferred from homology"/>
<comment type="function">
    <text evidence="1">ATP-dependent serine protease that mediates the selective degradation of mutant and abnormal proteins as well as certain short-lived regulatory proteins. Required for cellular homeostasis and for survival from DNA damage and developmental changes induced by stress. Degrades polypeptides processively to yield small peptide fragments that are 5 to 10 amino acids long. Binds to DNA in a double-stranded, site-specific manner.</text>
</comment>
<comment type="catalytic activity">
    <reaction evidence="1">
        <text>Hydrolysis of proteins in presence of ATP.</text>
        <dbReference type="EC" id="3.4.21.53"/>
    </reaction>
</comment>
<comment type="subunit">
    <text evidence="1">Homohexamer. Organized in a ring with a central cavity.</text>
</comment>
<comment type="subcellular location">
    <subcellularLocation>
        <location evidence="1">Cytoplasm</location>
    </subcellularLocation>
</comment>
<comment type="induction">
    <text evidence="1">By heat shock.</text>
</comment>
<comment type="similarity">
    <text evidence="1">Belongs to the peptidase S16 family.</text>
</comment>
<gene>
    <name evidence="1" type="primary">lon</name>
    <name type="ordered locus">BUsg_461</name>
</gene>
<name>LON_BUCAP</name>
<accession>Q8K988</accession>
<reference key="1">
    <citation type="journal article" date="2002" name="Science">
        <title>50 million years of genomic stasis in endosymbiotic bacteria.</title>
        <authorList>
            <person name="Tamas I."/>
            <person name="Klasson L."/>
            <person name="Canbaeck B."/>
            <person name="Naeslund A.K."/>
            <person name="Eriksson A.-S."/>
            <person name="Wernegreen J.J."/>
            <person name="Sandstroem J.P."/>
            <person name="Moran N.A."/>
            <person name="Andersson S.G.E."/>
        </authorList>
    </citation>
    <scope>NUCLEOTIDE SEQUENCE [LARGE SCALE GENOMIC DNA]</scope>
    <source>
        <strain>Sg</strain>
    </source>
</reference>
<organism>
    <name type="scientific">Buchnera aphidicola subsp. Schizaphis graminum (strain Sg)</name>
    <dbReference type="NCBI Taxonomy" id="198804"/>
    <lineage>
        <taxon>Bacteria</taxon>
        <taxon>Pseudomonadati</taxon>
        <taxon>Pseudomonadota</taxon>
        <taxon>Gammaproteobacteria</taxon>
        <taxon>Enterobacterales</taxon>
        <taxon>Erwiniaceae</taxon>
        <taxon>Buchnera</taxon>
    </lineage>
</organism>
<sequence>MNSERSERIKIPVLPLRDVVVYPHMVIPLFVGRKKSIHCIETSMNNDKKIMLIAQKEASKDEPSTNDLFNIGTISSILQMLKLPDGTVKVLVEGLQRACIKNIESNGEHLVAEVELIISPTVIDKEQEVLIRTTVNQFESYIKLNKKIPSEILNTLSQTKNAEKLADTIAAHMPLKLADKQSVLEIYNVNERLEFLMAIMETEIDLLKVEKRIRNRVKKQMEKSQREYYLNEQIKAIQKELGDMDEIPDENKILKRKIKSLKMPKEAKEKTESELQKLKMMSPMSAEATVVRSYIDWMIQVPWNIKTKIKKDIQEAKKILDIDHFGLEKVKERILEYLAVQSRTNKVKGPILCLIGPPGVGKTSLGKSIAKSTGRKYVRMALGGIRDEAEIRGHRRTYIGSMPGKLMQKMVKAKVKNPLFLLDEIDKMSCDIRVDPASALLEVLDPEQNINFNDHYLEVDYDLSDVMFVATSNSMNIPAPLLDRMEIIRLSGYTENEKLNIAKCYLYPKQMERNALKRNELIITDCAIISIIQYYTREAGVRSLEREISKICRKVVKLLILNKSLKKIEINSKNLKKFLGIKRFDYGKTNNLNQIGQVVGLAWTEVGGELLTIETACVSGKGKLTYTGSLGEVMQESIQAALTVVRSQAKKLGIKKDFHEKHDIHVHVPEGATPKDGPSAGIAMCTAIVSSLTKNPVKSNIAMTGEITLQGRVLTIGGLKEKLLAAHRGGVKTVLIPYENKRNLEEIPKNIIEGLTIYPVKNIEEVLKIALENTPYV</sequence>
<keyword id="KW-0067">ATP-binding</keyword>
<keyword id="KW-0963">Cytoplasm</keyword>
<keyword id="KW-0378">Hydrolase</keyword>
<keyword id="KW-0547">Nucleotide-binding</keyword>
<keyword id="KW-0645">Protease</keyword>
<keyword id="KW-0720">Serine protease</keyword>
<keyword id="KW-0346">Stress response</keyword>
<feature type="chain" id="PRO_0000076126" description="Lon protease">
    <location>
        <begin position="1"/>
        <end position="777"/>
    </location>
</feature>
<feature type="domain" description="Lon N-terminal" evidence="3">
    <location>
        <begin position="11"/>
        <end position="204"/>
    </location>
</feature>
<feature type="domain" description="Lon proteolytic" evidence="2">
    <location>
        <begin position="592"/>
        <end position="773"/>
    </location>
</feature>
<feature type="active site" evidence="1">
    <location>
        <position position="679"/>
    </location>
</feature>
<feature type="active site" evidence="1">
    <location>
        <position position="722"/>
    </location>
</feature>
<feature type="binding site" evidence="1">
    <location>
        <begin position="356"/>
        <end position="363"/>
    </location>
    <ligand>
        <name>ATP</name>
        <dbReference type="ChEBI" id="CHEBI:30616"/>
    </ligand>
</feature>
<evidence type="ECO:0000255" key="1">
    <source>
        <dbReference type="HAMAP-Rule" id="MF_01973"/>
    </source>
</evidence>
<evidence type="ECO:0000255" key="2">
    <source>
        <dbReference type="PROSITE-ProRule" id="PRU01122"/>
    </source>
</evidence>
<evidence type="ECO:0000255" key="3">
    <source>
        <dbReference type="PROSITE-ProRule" id="PRU01123"/>
    </source>
</evidence>
<dbReference type="EC" id="3.4.21.53" evidence="1"/>
<dbReference type="EMBL" id="AE013218">
    <property type="protein sequence ID" value="AAM68004.1"/>
    <property type="molecule type" value="Genomic_DNA"/>
</dbReference>
<dbReference type="RefSeq" id="WP_011053971.1">
    <property type="nucleotide sequence ID" value="NC_004061.1"/>
</dbReference>
<dbReference type="SMR" id="Q8K988"/>
<dbReference type="STRING" id="198804.BUsg_461"/>
<dbReference type="MEROPS" id="S16.001"/>
<dbReference type="GeneID" id="93003932"/>
<dbReference type="KEGG" id="bas:BUsg_461"/>
<dbReference type="eggNOG" id="COG0466">
    <property type="taxonomic scope" value="Bacteria"/>
</dbReference>
<dbReference type="HOGENOM" id="CLU_004109_4_3_6"/>
<dbReference type="Proteomes" id="UP000000416">
    <property type="component" value="Chromosome"/>
</dbReference>
<dbReference type="GO" id="GO:0005737">
    <property type="term" value="C:cytoplasm"/>
    <property type="evidence" value="ECO:0007669"/>
    <property type="project" value="UniProtKB-SubCell"/>
</dbReference>
<dbReference type="GO" id="GO:0005524">
    <property type="term" value="F:ATP binding"/>
    <property type="evidence" value="ECO:0007669"/>
    <property type="project" value="UniProtKB-UniRule"/>
</dbReference>
<dbReference type="GO" id="GO:0016887">
    <property type="term" value="F:ATP hydrolysis activity"/>
    <property type="evidence" value="ECO:0007669"/>
    <property type="project" value="UniProtKB-UniRule"/>
</dbReference>
<dbReference type="GO" id="GO:0004176">
    <property type="term" value="F:ATP-dependent peptidase activity"/>
    <property type="evidence" value="ECO:0007669"/>
    <property type="project" value="UniProtKB-UniRule"/>
</dbReference>
<dbReference type="GO" id="GO:0043565">
    <property type="term" value="F:sequence-specific DNA binding"/>
    <property type="evidence" value="ECO:0007669"/>
    <property type="project" value="UniProtKB-UniRule"/>
</dbReference>
<dbReference type="GO" id="GO:0004252">
    <property type="term" value="F:serine-type endopeptidase activity"/>
    <property type="evidence" value="ECO:0007669"/>
    <property type="project" value="UniProtKB-UniRule"/>
</dbReference>
<dbReference type="GO" id="GO:0034605">
    <property type="term" value="P:cellular response to heat"/>
    <property type="evidence" value="ECO:0007669"/>
    <property type="project" value="UniProtKB-UniRule"/>
</dbReference>
<dbReference type="GO" id="GO:0006515">
    <property type="term" value="P:protein quality control for misfolded or incompletely synthesized proteins"/>
    <property type="evidence" value="ECO:0007669"/>
    <property type="project" value="UniProtKB-UniRule"/>
</dbReference>
<dbReference type="CDD" id="cd19500">
    <property type="entry name" value="RecA-like_Lon"/>
    <property type="match status" value="1"/>
</dbReference>
<dbReference type="FunFam" id="1.10.8.60:FF:000035">
    <property type="entry name" value="Lon protease"/>
    <property type="match status" value="1"/>
</dbReference>
<dbReference type="FunFam" id="1.20.58.1480:FF:000001">
    <property type="entry name" value="Lon protease"/>
    <property type="match status" value="1"/>
</dbReference>
<dbReference type="FunFam" id="2.30.130.40:FF:000001">
    <property type="entry name" value="Lon protease"/>
    <property type="match status" value="1"/>
</dbReference>
<dbReference type="FunFam" id="3.30.230.10:FF:000010">
    <property type="entry name" value="Lon protease"/>
    <property type="match status" value="1"/>
</dbReference>
<dbReference type="FunFam" id="1.20.5.5270:FF:000002">
    <property type="entry name" value="Lon protease homolog"/>
    <property type="match status" value="1"/>
</dbReference>
<dbReference type="FunFam" id="3.40.50.300:FF:000021">
    <property type="entry name" value="Lon protease homolog"/>
    <property type="match status" value="1"/>
</dbReference>
<dbReference type="Gene3D" id="1.10.8.60">
    <property type="match status" value="1"/>
</dbReference>
<dbReference type="Gene3D" id="1.20.5.5270">
    <property type="match status" value="1"/>
</dbReference>
<dbReference type="Gene3D" id="1.20.58.1480">
    <property type="match status" value="1"/>
</dbReference>
<dbReference type="Gene3D" id="3.30.230.10">
    <property type="match status" value="1"/>
</dbReference>
<dbReference type="Gene3D" id="2.30.130.40">
    <property type="entry name" value="LON domain-like"/>
    <property type="match status" value="1"/>
</dbReference>
<dbReference type="Gene3D" id="3.40.50.300">
    <property type="entry name" value="P-loop containing nucleotide triphosphate hydrolases"/>
    <property type="match status" value="1"/>
</dbReference>
<dbReference type="HAMAP" id="MF_01973">
    <property type="entry name" value="lon_bact"/>
    <property type="match status" value="1"/>
</dbReference>
<dbReference type="InterPro" id="IPR003593">
    <property type="entry name" value="AAA+_ATPase"/>
</dbReference>
<dbReference type="InterPro" id="IPR003959">
    <property type="entry name" value="ATPase_AAA_core"/>
</dbReference>
<dbReference type="InterPro" id="IPR027543">
    <property type="entry name" value="Lon_bac"/>
</dbReference>
<dbReference type="InterPro" id="IPR004815">
    <property type="entry name" value="Lon_bac/euk-typ"/>
</dbReference>
<dbReference type="InterPro" id="IPR054594">
    <property type="entry name" value="Lon_lid"/>
</dbReference>
<dbReference type="InterPro" id="IPR008269">
    <property type="entry name" value="Lon_proteolytic"/>
</dbReference>
<dbReference type="InterPro" id="IPR027065">
    <property type="entry name" value="Lon_Prtase"/>
</dbReference>
<dbReference type="InterPro" id="IPR003111">
    <property type="entry name" value="Lon_prtase_N"/>
</dbReference>
<dbReference type="InterPro" id="IPR046336">
    <property type="entry name" value="Lon_prtase_N_sf"/>
</dbReference>
<dbReference type="InterPro" id="IPR027417">
    <property type="entry name" value="P-loop_NTPase"/>
</dbReference>
<dbReference type="InterPro" id="IPR008268">
    <property type="entry name" value="Peptidase_S16_AS"/>
</dbReference>
<dbReference type="InterPro" id="IPR015947">
    <property type="entry name" value="PUA-like_sf"/>
</dbReference>
<dbReference type="InterPro" id="IPR020568">
    <property type="entry name" value="Ribosomal_Su5_D2-typ_SF"/>
</dbReference>
<dbReference type="InterPro" id="IPR014721">
    <property type="entry name" value="Ribsml_uS5_D2-typ_fold_subgr"/>
</dbReference>
<dbReference type="NCBIfam" id="TIGR00763">
    <property type="entry name" value="lon"/>
    <property type="match status" value="1"/>
</dbReference>
<dbReference type="NCBIfam" id="NF008053">
    <property type="entry name" value="PRK10787.1"/>
    <property type="match status" value="1"/>
</dbReference>
<dbReference type="PANTHER" id="PTHR10046">
    <property type="entry name" value="ATP DEPENDENT LON PROTEASE FAMILY MEMBER"/>
    <property type="match status" value="1"/>
</dbReference>
<dbReference type="Pfam" id="PF00004">
    <property type="entry name" value="AAA"/>
    <property type="match status" value="1"/>
</dbReference>
<dbReference type="Pfam" id="PF05362">
    <property type="entry name" value="Lon_C"/>
    <property type="match status" value="1"/>
</dbReference>
<dbReference type="Pfam" id="PF22667">
    <property type="entry name" value="Lon_lid"/>
    <property type="match status" value="1"/>
</dbReference>
<dbReference type="Pfam" id="PF02190">
    <property type="entry name" value="LON_substr_bdg"/>
    <property type="match status" value="1"/>
</dbReference>
<dbReference type="PIRSF" id="PIRSF001174">
    <property type="entry name" value="Lon_proteas"/>
    <property type="match status" value="1"/>
</dbReference>
<dbReference type="PRINTS" id="PR00830">
    <property type="entry name" value="ENDOLAPTASE"/>
</dbReference>
<dbReference type="SMART" id="SM00382">
    <property type="entry name" value="AAA"/>
    <property type="match status" value="1"/>
</dbReference>
<dbReference type="SMART" id="SM00464">
    <property type="entry name" value="LON"/>
    <property type="match status" value="1"/>
</dbReference>
<dbReference type="SUPFAM" id="SSF52540">
    <property type="entry name" value="P-loop containing nucleoside triphosphate hydrolases"/>
    <property type="match status" value="1"/>
</dbReference>
<dbReference type="SUPFAM" id="SSF88697">
    <property type="entry name" value="PUA domain-like"/>
    <property type="match status" value="1"/>
</dbReference>
<dbReference type="SUPFAM" id="SSF54211">
    <property type="entry name" value="Ribosomal protein S5 domain 2-like"/>
    <property type="match status" value="1"/>
</dbReference>
<dbReference type="PROSITE" id="PS51787">
    <property type="entry name" value="LON_N"/>
    <property type="match status" value="1"/>
</dbReference>
<dbReference type="PROSITE" id="PS51786">
    <property type="entry name" value="LON_PROTEOLYTIC"/>
    <property type="match status" value="1"/>
</dbReference>
<dbReference type="PROSITE" id="PS01046">
    <property type="entry name" value="LON_SER"/>
    <property type="match status" value="1"/>
</dbReference>
<protein>
    <recommendedName>
        <fullName evidence="1">Lon protease</fullName>
        <ecNumber evidence="1">3.4.21.53</ecNumber>
    </recommendedName>
    <alternativeName>
        <fullName evidence="1">ATP-dependent protease La</fullName>
    </alternativeName>
</protein>